<reference key="1">
    <citation type="journal article" date="2004" name="J. Infect. Dis.">
        <title>Progress toward characterization of the group A Streptococcus metagenome: complete genome sequence of a macrolide-resistant serotype M6 strain.</title>
        <authorList>
            <person name="Banks D.J."/>
            <person name="Porcella S.F."/>
            <person name="Barbian K.D."/>
            <person name="Beres S.B."/>
            <person name="Philips L.E."/>
            <person name="Voyich J.M."/>
            <person name="DeLeo F.R."/>
            <person name="Martin J.M."/>
            <person name="Somerville G.A."/>
            <person name="Musser J.M."/>
        </authorList>
    </citation>
    <scope>NUCLEOTIDE SEQUENCE [LARGE SCALE GENOMIC DNA]</scope>
    <source>
        <strain>ATCC BAA-946 / MGAS10394</strain>
    </source>
</reference>
<evidence type="ECO:0000255" key="1">
    <source>
        <dbReference type="HAMAP-Rule" id="MF_01152"/>
    </source>
</evidence>
<evidence type="ECO:0000305" key="2"/>
<gene>
    <name evidence="1" type="primary">dnaJ</name>
    <name type="ordered locus">M6_Spy1491</name>
</gene>
<protein>
    <recommendedName>
        <fullName evidence="1">Chaperone protein DnaJ</fullName>
    </recommendedName>
</protein>
<dbReference type="EMBL" id="CP000003">
    <property type="protein sequence ID" value="AAT87626.1"/>
    <property type="status" value="ALT_INIT"/>
    <property type="molecule type" value="Genomic_DNA"/>
</dbReference>
<dbReference type="RefSeq" id="WP_011018158.1">
    <property type="nucleotide sequence ID" value="NC_006086.1"/>
</dbReference>
<dbReference type="SMR" id="Q5XAD7"/>
<dbReference type="KEGG" id="spa:M6_Spy1491"/>
<dbReference type="HOGENOM" id="CLU_017633_0_7_9"/>
<dbReference type="Proteomes" id="UP000001167">
    <property type="component" value="Chromosome"/>
</dbReference>
<dbReference type="GO" id="GO:0005737">
    <property type="term" value="C:cytoplasm"/>
    <property type="evidence" value="ECO:0007669"/>
    <property type="project" value="UniProtKB-SubCell"/>
</dbReference>
<dbReference type="GO" id="GO:0005524">
    <property type="term" value="F:ATP binding"/>
    <property type="evidence" value="ECO:0007669"/>
    <property type="project" value="InterPro"/>
</dbReference>
<dbReference type="GO" id="GO:0031072">
    <property type="term" value="F:heat shock protein binding"/>
    <property type="evidence" value="ECO:0007669"/>
    <property type="project" value="InterPro"/>
</dbReference>
<dbReference type="GO" id="GO:0051082">
    <property type="term" value="F:unfolded protein binding"/>
    <property type="evidence" value="ECO:0007669"/>
    <property type="project" value="UniProtKB-UniRule"/>
</dbReference>
<dbReference type="GO" id="GO:0008270">
    <property type="term" value="F:zinc ion binding"/>
    <property type="evidence" value="ECO:0007669"/>
    <property type="project" value="UniProtKB-UniRule"/>
</dbReference>
<dbReference type="GO" id="GO:0051085">
    <property type="term" value="P:chaperone cofactor-dependent protein refolding"/>
    <property type="evidence" value="ECO:0007669"/>
    <property type="project" value="TreeGrafter"/>
</dbReference>
<dbReference type="GO" id="GO:0006260">
    <property type="term" value="P:DNA replication"/>
    <property type="evidence" value="ECO:0007669"/>
    <property type="project" value="UniProtKB-KW"/>
</dbReference>
<dbReference type="GO" id="GO:0042026">
    <property type="term" value="P:protein refolding"/>
    <property type="evidence" value="ECO:0007669"/>
    <property type="project" value="TreeGrafter"/>
</dbReference>
<dbReference type="GO" id="GO:0009408">
    <property type="term" value="P:response to heat"/>
    <property type="evidence" value="ECO:0007669"/>
    <property type="project" value="InterPro"/>
</dbReference>
<dbReference type="CDD" id="cd06257">
    <property type="entry name" value="DnaJ"/>
    <property type="match status" value="1"/>
</dbReference>
<dbReference type="CDD" id="cd10747">
    <property type="entry name" value="DnaJ_C"/>
    <property type="match status" value="1"/>
</dbReference>
<dbReference type="CDD" id="cd10719">
    <property type="entry name" value="DnaJ_zf"/>
    <property type="match status" value="1"/>
</dbReference>
<dbReference type="FunFam" id="1.10.287.110:FF:000031">
    <property type="entry name" value="Molecular chaperone DnaJ"/>
    <property type="match status" value="1"/>
</dbReference>
<dbReference type="FunFam" id="2.10.230.10:FF:000002">
    <property type="entry name" value="Molecular chaperone DnaJ"/>
    <property type="match status" value="1"/>
</dbReference>
<dbReference type="FunFam" id="2.60.260.20:FF:000004">
    <property type="entry name" value="Molecular chaperone DnaJ"/>
    <property type="match status" value="1"/>
</dbReference>
<dbReference type="Gene3D" id="1.10.287.110">
    <property type="entry name" value="DnaJ domain"/>
    <property type="match status" value="1"/>
</dbReference>
<dbReference type="Gene3D" id="2.10.230.10">
    <property type="entry name" value="Heat shock protein DnaJ, cysteine-rich domain"/>
    <property type="match status" value="1"/>
</dbReference>
<dbReference type="Gene3D" id="2.60.260.20">
    <property type="entry name" value="Urease metallochaperone UreE, N-terminal domain"/>
    <property type="match status" value="2"/>
</dbReference>
<dbReference type="HAMAP" id="MF_01152">
    <property type="entry name" value="DnaJ"/>
    <property type="match status" value="1"/>
</dbReference>
<dbReference type="InterPro" id="IPR012724">
    <property type="entry name" value="DnaJ"/>
</dbReference>
<dbReference type="InterPro" id="IPR002939">
    <property type="entry name" value="DnaJ_C"/>
</dbReference>
<dbReference type="InterPro" id="IPR001623">
    <property type="entry name" value="DnaJ_domain"/>
</dbReference>
<dbReference type="InterPro" id="IPR018253">
    <property type="entry name" value="DnaJ_domain_CS"/>
</dbReference>
<dbReference type="InterPro" id="IPR008971">
    <property type="entry name" value="HSP40/DnaJ_pept-bd"/>
</dbReference>
<dbReference type="InterPro" id="IPR001305">
    <property type="entry name" value="HSP_DnaJ_Cys-rich_dom"/>
</dbReference>
<dbReference type="InterPro" id="IPR036410">
    <property type="entry name" value="HSP_DnaJ_Cys-rich_dom_sf"/>
</dbReference>
<dbReference type="InterPro" id="IPR036869">
    <property type="entry name" value="J_dom_sf"/>
</dbReference>
<dbReference type="NCBIfam" id="TIGR02349">
    <property type="entry name" value="DnaJ_bact"/>
    <property type="match status" value="1"/>
</dbReference>
<dbReference type="NCBIfam" id="NF008035">
    <property type="entry name" value="PRK10767.1"/>
    <property type="match status" value="1"/>
</dbReference>
<dbReference type="NCBIfam" id="NF010869">
    <property type="entry name" value="PRK14276.1"/>
    <property type="match status" value="1"/>
</dbReference>
<dbReference type="PANTHER" id="PTHR43096:SF48">
    <property type="entry name" value="CHAPERONE PROTEIN DNAJ"/>
    <property type="match status" value="1"/>
</dbReference>
<dbReference type="PANTHER" id="PTHR43096">
    <property type="entry name" value="DNAJ HOMOLOG 1, MITOCHONDRIAL-RELATED"/>
    <property type="match status" value="1"/>
</dbReference>
<dbReference type="Pfam" id="PF00226">
    <property type="entry name" value="DnaJ"/>
    <property type="match status" value="1"/>
</dbReference>
<dbReference type="Pfam" id="PF01556">
    <property type="entry name" value="DnaJ_C"/>
    <property type="match status" value="1"/>
</dbReference>
<dbReference type="Pfam" id="PF00684">
    <property type="entry name" value="DnaJ_CXXCXGXG"/>
    <property type="match status" value="1"/>
</dbReference>
<dbReference type="PRINTS" id="PR00625">
    <property type="entry name" value="JDOMAIN"/>
</dbReference>
<dbReference type="SMART" id="SM00271">
    <property type="entry name" value="DnaJ"/>
    <property type="match status" value="1"/>
</dbReference>
<dbReference type="SUPFAM" id="SSF46565">
    <property type="entry name" value="Chaperone J-domain"/>
    <property type="match status" value="1"/>
</dbReference>
<dbReference type="SUPFAM" id="SSF57938">
    <property type="entry name" value="DnaJ/Hsp40 cysteine-rich domain"/>
    <property type="match status" value="1"/>
</dbReference>
<dbReference type="SUPFAM" id="SSF49493">
    <property type="entry name" value="HSP40/DnaJ peptide-binding domain"/>
    <property type="match status" value="2"/>
</dbReference>
<dbReference type="PROSITE" id="PS00636">
    <property type="entry name" value="DNAJ_1"/>
    <property type="match status" value="1"/>
</dbReference>
<dbReference type="PROSITE" id="PS50076">
    <property type="entry name" value="DNAJ_2"/>
    <property type="match status" value="1"/>
</dbReference>
<dbReference type="PROSITE" id="PS51188">
    <property type="entry name" value="ZF_CR"/>
    <property type="match status" value="1"/>
</dbReference>
<organism>
    <name type="scientific">Streptococcus pyogenes serotype M6 (strain ATCC BAA-946 / MGAS10394)</name>
    <dbReference type="NCBI Taxonomy" id="286636"/>
    <lineage>
        <taxon>Bacteria</taxon>
        <taxon>Bacillati</taxon>
        <taxon>Bacillota</taxon>
        <taxon>Bacilli</taxon>
        <taxon>Lactobacillales</taxon>
        <taxon>Streptococcaceae</taxon>
        <taxon>Streptococcus</taxon>
    </lineage>
</organism>
<keyword id="KW-0143">Chaperone</keyword>
<keyword id="KW-0963">Cytoplasm</keyword>
<keyword id="KW-0235">DNA replication</keyword>
<keyword id="KW-0479">Metal-binding</keyword>
<keyword id="KW-0677">Repeat</keyword>
<keyword id="KW-0346">Stress response</keyword>
<keyword id="KW-0862">Zinc</keyword>
<keyword id="KW-0863">Zinc-finger</keyword>
<sequence length="378" mass="40453">MNNTEYYDRLGVSKDASQDDIKKAYRKMSKKYHPDINKEAGAEQKYKDVQEAYETLSDSQKRAAYDQYGAAGAQGGFGGGAGGFGGFDGGGFGGFEDIFSSFFGGGGSRNPNAPRQGDDLQYRVNLSFEEAVFGVEKEVSYNREATCGTCLGSGAKPGTAPVTCRKCHGSGVMTIDTQTPLGMMRRQVTCDICHGSGKEIKEPCQTCHGTGHEKQAHKVSVKIPAGVETGQQIRLQGQGEAGFNGGPYGDLFVILNVLPSKQFERNGSTIYYSLDISFTQAALGDTVEIPTVHGDVEMAIPAGTQTGKTFRLKGKGAPKLRGGGQGDQHVTVNIVTPTKLNDAQREALQAFAEASGDKMLHPKKKGFFDKVKDALEDI</sequence>
<feature type="chain" id="PRO_0000070906" description="Chaperone protein DnaJ">
    <location>
        <begin position="1"/>
        <end position="378"/>
    </location>
</feature>
<feature type="domain" description="J" evidence="1">
    <location>
        <begin position="5"/>
        <end position="69"/>
    </location>
</feature>
<feature type="repeat" description="CXXCXGXG motif">
    <location>
        <begin position="147"/>
        <end position="154"/>
    </location>
</feature>
<feature type="repeat" description="CXXCXGXG motif">
    <location>
        <begin position="164"/>
        <end position="171"/>
    </location>
</feature>
<feature type="repeat" description="CXXCXGXG motif">
    <location>
        <begin position="190"/>
        <end position="197"/>
    </location>
</feature>
<feature type="repeat" description="CXXCXGXG motif">
    <location>
        <begin position="204"/>
        <end position="211"/>
    </location>
</feature>
<feature type="zinc finger region" description="CR-type" evidence="1">
    <location>
        <begin position="134"/>
        <end position="216"/>
    </location>
</feature>
<feature type="binding site" evidence="1">
    <location>
        <position position="147"/>
    </location>
    <ligand>
        <name>Zn(2+)</name>
        <dbReference type="ChEBI" id="CHEBI:29105"/>
        <label>1</label>
    </ligand>
</feature>
<feature type="binding site" evidence="1">
    <location>
        <position position="150"/>
    </location>
    <ligand>
        <name>Zn(2+)</name>
        <dbReference type="ChEBI" id="CHEBI:29105"/>
        <label>1</label>
    </ligand>
</feature>
<feature type="binding site" evidence="1">
    <location>
        <position position="164"/>
    </location>
    <ligand>
        <name>Zn(2+)</name>
        <dbReference type="ChEBI" id="CHEBI:29105"/>
        <label>2</label>
    </ligand>
</feature>
<feature type="binding site" evidence="1">
    <location>
        <position position="167"/>
    </location>
    <ligand>
        <name>Zn(2+)</name>
        <dbReference type="ChEBI" id="CHEBI:29105"/>
        <label>2</label>
    </ligand>
</feature>
<feature type="binding site" evidence="1">
    <location>
        <position position="190"/>
    </location>
    <ligand>
        <name>Zn(2+)</name>
        <dbReference type="ChEBI" id="CHEBI:29105"/>
        <label>2</label>
    </ligand>
</feature>
<feature type="binding site" evidence="1">
    <location>
        <position position="193"/>
    </location>
    <ligand>
        <name>Zn(2+)</name>
        <dbReference type="ChEBI" id="CHEBI:29105"/>
        <label>2</label>
    </ligand>
</feature>
<feature type="binding site" evidence="1">
    <location>
        <position position="204"/>
    </location>
    <ligand>
        <name>Zn(2+)</name>
        <dbReference type="ChEBI" id="CHEBI:29105"/>
        <label>1</label>
    </ligand>
</feature>
<feature type="binding site" evidence="1">
    <location>
        <position position="207"/>
    </location>
    <ligand>
        <name>Zn(2+)</name>
        <dbReference type="ChEBI" id="CHEBI:29105"/>
        <label>1</label>
    </ligand>
</feature>
<accession>Q5XAD7</accession>
<proteinExistence type="inferred from homology"/>
<comment type="function">
    <text evidence="1">Participates actively in the response to hyperosmotic and heat shock by preventing the aggregation of stress-denatured proteins and by disaggregating proteins, also in an autonomous, DnaK-independent fashion. Unfolded proteins bind initially to DnaJ; upon interaction with the DnaJ-bound protein, DnaK hydrolyzes its bound ATP, resulting in the formation of a stable complex. GrpE releases ADP from DnaK; ATP binding to DnaK triggers the release of the substrate protein, thus completing the reaction cycle. Several rounds of ATP-dependent interactions between DnaJ, DnaK and GrpE are required for fully efficient folding. Also involved, together with DnaK and GrpE, in the DNA replication of plasmids through activation of initiation proteins.</text>
</comment>
<comment type="cofactor">
    <cofactor evidence="1">
        <name>Zn(2+)</name>
        <dbReference type="ChEBI" id="CHEBI:29105"/>
    </cofactor>
    <text evidence="1">Binds 2 Zn(2+) ions per monomer.</text>
</comment>
<comment type="subunit">
    <text evidence="1">Homodimer.</text>
</comment>
<comment type="subcellular location">
    <subcellularLocation>
        <location evidence="1">Cytoplasm</location>
    </subcellularLocation>
</comment>
<comment type="domain">
    <text evidence="1">The J domain is necessary and sufficient to stimulate DnaK ATPase activity. Zinc center 1 plays an important role in the autonomous, DnaK-independent chaperone activity of DnaJ. Zinc center 2 is essential for interaction with DnaK and for DnaJ activity.</text>
</comment>
<comment type="similarity">
    <text evidence="1">Belongs to the DnaJ family.</text>
</comment>
<comment type="sequence caution" evidence="2">
    <conflict type="erroneous initiation">
        <sequence resource="EMBL-CDS" id="AAT87626"/>
    </conflict>
</comment>
<name>DNAJ_STRP6</name>